<organism>
    <name type="scientific">Kocuria rhizophila (strain ATCC 9341 / DSM 348 / NBRC 103217 / DC2201)</name>
    <dbReference type="NCBI Taxonomy" id="378753"/>
    <lineage>
        <taxon>Bacteria</taxon>
        <taxon>Bacillati</taxon>
        <taxon>Actinomycetota</taxon>
        <taxon>Actinomycetes</taxon>
        <taxon>Micrococcales</taxon>
        <taxon>Micrococcaceae</taxon>
        <taxon>Kocuria</taxon>
    </lineage>
</organism>
<gene>
    <name evidence="1" type="primary">dcd</name>
    <name type="ordered locus">KRH_03790</name>
</gene>
<comment type="function">
    <text evidence="1">Bifunctional enzyme that catalyzes both the deamination of dCTP to dUTP and the hydrolysis of dUTP to dUMP without releasing the toxic dUTP intermediate.</text>
</comment>
<comment type="catalytic activity">
    <reaction evidence="1">
        <text>dCTP + 2 H2O = dUMP + NH4(+) + diphosphate</text>
        <dbReference type="Rhea" id="RHEA:19205"/>
        <dbReference type="ChEBI" id="CHEBI:15377"/>
        <dbReference type="ChEBI" id="CHEBI:28938"/>
        <dbReference type="ChEBI" id="CHEBI:33019"/>
        <dbReference type="ChEBI" id="CHEBI:61481"/>
        <dbReference type="ChEBI" id="CHEBI:246422"/>
        <dbReference type="EC" id="3.5.4.30"/>
    </reaction>
</comment>
<comment type="pathway">
    <text evidence="1">Pyrimidine metabolism; dUMP biosynthesis; dUMP from dCTP: step 1/1.</text>
</comment>
<comment type="subunit">
    <text evidence="1">Homotrimer.</text>
</comment>
<comment type="similarity">
    <text evidence="1">Belongs to the dCTP deaminase family.</text>
</comment>
<keyword id="KW-0378">Hydrolase</keyword>
<keyword id="KW-0546">Nucleotide metabolism</keyword>
<keyword id="KW-0547">Nucleotide-binding</keyword>
<keyword id="KW-1185">Reference proteome</keyword>
<dbReference type="EC" id="3.5.4.30" evidence="1"/>
<dbReference type="EMBL" id="AP009152">
    <property type="protein sequence ID" value="BAG28726.1"/>
    <property type="molecule type" value="Genomic_DNA"/>
</dbReference>
<dbReference type="RefSeq" id="WP_012397453.1">
    <property type="nucleotide sequence ID" value="NZ_VECX01000002.1"/>
</dbReference>
<dbReference type="SMR" id="B2GGA3"/>
<dbReference type="STRING" id="378753.KRH_03790"/>
<dbReference type="KEGG" id="krh:KRH_03790"/>
<dbReference type="eggNOG" id="COG0717">
    <property type="taxonomic scope" value="Bacteria"/>
</dbReference>
<dbReference type="HOGENOM" id="CLU_087476_2_0_11"/>
<dbReference type="OrthoDB" id="9780956at2"/>
<dbReference type="UniPathway" id="UPA00610">
    <property type="reaction ID" value="UER00667"/>
</dbReference>
<dbReference type="Proteomes" id="UP000008838">
    <property type="component" value="Chromosome"/>
</dbReference>
<dbReference type="GO" id="GO:0033973">
    <property type="term" value="F:dCTP deaminase (dUMP-forming) activity"/>
    <property type="evidence" value="ECO:0007669"/>
    <property type="project" value="UniProtKB-UniRule"/>
</dbReference>
<dbReference type="GO" id="GO:0008829">
    <property type="term" value="F:dCTP deaminase activity"/>
    <property type="evidence" value="ECO:0007669"/>
    <property type="project" value="InterPro"/>
</dbReference>
<dbReference type="GO" id="GO:0000166">
    <property type="term" value="F:nucleotide binding"/>
    <property type="evidence" value="ECO:0007669"/>
    <property type="project" value="UniProtKB-KW"/>
</dbReference>
<dbReference type="GO" id="GO:0006226">
    <property type="term" value="P:dUMP biosynthetic process"/>
    <property type="evidence" value="ECO:0007669"/>
    <property type="project" value="UniProtKB-UniRule"/>
</dbReference>
<dbReference type="GO" id="GO:0006229">
    <property type="term" value="P:dUTP biosynthetic process"/>
    <property type="evidence" value="ECO:0007669"/>
    <property type="project" value="InterPro"/>
</dbReference>
<dbReference type="GO" id="GO:0015949">
    <property type="term" value="P:nucleobase-containing small molecule interconversion"/>
    <property type="evidence" value="ECO:0007669"/>
    <property type="project" value="TreeGrafter"/>
</dbReference>
<dbReference type="CDD" id="cd07557">
    <property type="entry name" value="trimeric_dUTPase"/>
    <property type="match status" value="1"/>
</dbReference>
<dbReference type="FunFam" id="2.70.40.10:FF:000005">
    <property type="entry name" value="dCTP deaminase, dUMP-forming"/>
    <property type="match status" value="1"/>
</dbReference>
<dbReference type="Gene3D" id="2.70.40.10">
    <property type="match status" value="1"/>
</dbReference>
<dbReference type="HAMAP" id="MF_00146">
    <property type="entry name" value="dCTP_deaminase"/>
    <property type="match status" value="1"/>
</dbReference>
<dbReference type="InterPro" id="IPR011962">
    <property type="entry name" value="dCTP_deaminase"/>
</dbReference>
<dbReference type="InterPro" id="IPR036157">
    <property type="entry name" value="dUTPase-like_sf"/>
</dbReference>
<dbReference type="InterPro" id="IPR033704">
    <property type="entry name" value="dUTPase_trimeric"/>
</dbReference>
<dbReference type="NCBIfam" id="TIGR02274">
    <property type="entry name" value="dCTP_deam"/>
    <property type="match status" value="1"/>
</dbReference>
<dbReference type="PANTHER" id="PTHR42680">
    <property type="entry name" value="DCTP DEAMINASE"/>
    <property type="match status" value="1"/>
</dbReference>
<dbReference type="PANTHER" id="PTHR42680:SF3">
    <property type="entry name" value="DCTP DEAMINASE"/>
    <property type="match status" value="1"/>
</dbReference>
<dbReference type="Pfam" id="PF22769">
    <property type="entry name" value="DCD"/>
    <property type="match status" value="1"/>
</dbReference>
<dbReference type="SUPFAM" id="SSF51283">
    <property type="entry name" value="dUTPase-like"/>
    <property type="match status" value="1"/>
</dbReference>
<sequence length="192" mass="21469">MLISDRDIRRHLDSGRVRLEPSDPAMVQPASVDVRLDRWFRLFDNHKYAHIDPEQEQPELTRLVEVAPDEPFVLHPGEFVLGATYEKVTLPDDIAARLEGKSSLGRLGLLTHSTAGFIDPGFSGHVTLELSNMATLPIKLWPGSKVGQLCFFQLSSPTEHPYGSGAYGNRYQGQRGPTASRSHLNFHRTVIE</sequence>
<evidence type="ECO:0000255" key="1">
    <source>
        <dbReference type="HAMAP-Rule" id="MF_00146"/>
    </source>
</evidence>
<evidence type="ECO:0000256" key="2">
    <source>
        <dbReference type="SAM" id="MobiDB-lite"/>
    </source>
</evidence>
<proteinExistence type="inferred from homology"/>
<protein>
    <recommendedName>
        <fullName evidence="1">dCTP deaminase, dUMP-forming</fullName>
        <ecNumber evidence="1">3.5.4.30</ecNumber>
    </recommendedName>
    <alternativeName>
        <fullName evidence="1">Bifunctional dCTP deaminase:dUTPase</fullName>
    </alternativeName>
    <alternativeName>
        <fullName evidence="1">DCD-DUT</fullName>
    </alternativeName>
</protein>
<feature type="chain" id="PRO_1000096435" description="dCTP deaminase, dUMP-forming">
    <location>
        <begin position="1"/>
        <end position="192"/>
    </location>
</feature>
<feature type="region of interest" description="Disordered" evidence="2">
    <location>
        <begin position="165"/>
        <end position="184"/>
    </location>
</feature>
<feature type="compositionally biased region" description="Polar residues" evidence="2">
    <location>
        <begin position="171"/>
        <end position="183"/>
    </location>
</feature>
<feature type="active site" description="Proton donor/acceptor" evidence="1">
    <location>
        <position position="129"/>
    </location>
</feature>
<feature type="binding site" evidence="1">
    <location>
        <begin position="101"/>
        <end position="106"/>
    </location>
    <ligand>
        <name>dCTP</name>
        <dbReference type="ChEBI" id="CHEBI:61481"/>
    </ligand>
</feature>
<feature type="binding site" evidence="1">
    <location>
        <position position="119"/>
    </location>
    <ligand>
        <name>dCTP</name>
        <dbReference type="ChEBI" id="CHEBI:61481"/>
    </ligand>
</feature>
<feature type="binding site" evidence="1">
    <location>
        <begin position="127"/>
        <end position="129"/>
    </location>
    <ligand>
        <name>dCTP</name>
        <dbReference type="ChEBI" id="CHEBI:61481"/>
    </ligand>
</feature>
<feature type="binding site" evidence="1">
    <location>
        <position position="148"/>
    </location>
    <ligand>
        <name>dCTP</name>
        <dbReference type="ChEBI" id="CHEBI:61481"/>
    </ligand>
</feature>
<feature type="binding site" evidence="1">
    <location>
        <position position="162"/>
    </location>
    <ligand>
        <name>dCTP</name>
        <dbReference type="ChEBI" id="CHEBI:61481"/>
    </ligand>
</feature>
<feature type="binding site" evidence="1">
    <location>
        <position position="174"/>
    </location>
    <ligand>
        <name>dCTP</name>
        <dbReference type="ChEBI" id="CHEBI:61481"/>
    </ligand>
</feature>
<feature type="site" description="Important for bifunctional activity" evidence="1">
    <location>
        <begin position="116"/>
        <end position="117"/>
    </location>
</feature>
<reference key="1">
    <citation type="journal article" date="2008" name="J. Bacteriol.">
        <title>Complete genome sequence of the soil actinomycete Kocuria rhizophila.</title>
        <authorList>
            <person name="Takarada H."/>
            <person name="Sekine M."/>
            <person name="Kosugi H."/>
            <person name="Matsuo Y."/>
            <person name="Fujisawa T."/>
            <person name="Omata S."/>
            <person name="Kishi E."/>
            <person name="Shimizu A."/>
            <person name="Tsukatani N."/>
            <person name="Tanikawa S."/>
            <person name="Fujita N."/>
            <person name="Harayama S."/>
        </authorList>
    </citation>
    <scope>NUCLEOTIDE SEQUENCE [LARGE SCALE GENOMIC DNA]</scope>
    <source>
        <strain>ATCC 9341 / DSM 348 / NBRC 103217 / DC2201</strain>
    </source>
</reference>
<accession>B2GGA3</accession>
<name>DCDB_KOCRD</name>